<organism>
    <name type="scientific">Pseudoalteromonas atlantica (strain T6c / ATCC BAA-1087)</name>
    <dbReference type="NCBI Taxonomy" id="3042615"/>
    <lineage>
        <taxon>Bacteria</taxon>
        <taxon>Pseudomonadati</taxon>
        <taxon>Pseudomonadota</taxon>
        <taxon>Gammaproteobacteria</taxon>
        <taxon>Alteromonadales</taxon>
        <taxon>Alteromonadaceae</taxon>
        <taxon>Paraglaciecola</taxon>
    </lineage>
</organism>
<dbReference type="EC" id="2.7.7.18" evidence="1"/>
<dbReference type="EMBL" id="CP000388">
    <property type="protein sequence ID" value="ABG40085.1"/>
    <property type="molecule type" value="Genomic_DNA"/>
</dbReference>
<dbReference type="RefSeq" id="WP_011574399.1">
    <property type="nucleotide sequence ID" value="NC_008228.1"/>
</dbReference>
<dbReference type="SMR" id="Q15VK3"/>
<dbReference type="STRING" id="342610.Patl_1563"/>
<dbReference type="KEGG" id="pat:Patl_1563"/>
<dbReference type="eggNOG" id="COG1057">
    <property type="taxonomic scope" value="Bacteria"/>
</dbReference>
<dbReference type="HOGENOM" id="CLU_069765_0_0_6"/>
<dbReference type="OrthoDB" id="5295945at2"/>
<dbReference type="UniPathway" id="UPA00253">
    <property type="reaction ID" value="UER00332"/>
</dbReference>
<dbReference type="Proteomes" id="UP000001981">
    <property type="component" value="Chromosome"/>
</dbReference>
<dbReference type="GO" id="GO:0005524">
    <property type="term" value="F:ATP binding"/>
    <property type="evidence" value="ECO:0007669"/>
    <property type="project" value="UniProtKB-KW"/>
</dbReference>
<dbReference type="GO" id="GO:0004515">
    <property type="term" value="F:nicotinate-nucleotide adenylyltransferase activity"/>
    <property type="evidence" value="ECO:0007669"/>
    <property type="project" value="UniProtKB-UniRule"/>
</dbReference>
<dbReference type="GO" id="GO:0009435">
    <property type="term" value="P:NAD biosynthetic process"/>
    <property type="evidence" value="ECO:0007669"/>
    <property type="project" value="UniProtKB-UniRule"/>
</dbReference>
<dbReference type="CDD" id="cd02165">
    <property type="entry name" value="NMNAT"/>
    <property type="match status" value="1"/>
</dbReference>
<dbReference type="Gene3D" id="3.40.50.620">
    <property type="entry name" value="HUPs"/>
    <property type="match status" value="1"/>
</dbReference>
<dbReference type="HAMAP" id="MF_00244">
    <property type="entry name" value="NaMN_adenylyltr"/>
    <property type="match status" value="1"/>
</dbReference>
<dbReference type="InterPro" id="IPR004821">
    <property type="entry name" value="Cyt_trans-like"/>
</dbReference>
<dbReference type="InterPro" id="IPR005248">
    <property type="entry name" value="NadD/NMNAT"/>
</dbReference>
<dbReference type="InterPro" id="IPR014729">
    <property type="entry name" value="Rossmann-like_a/b/a_fold"/>
</dbReference>
<dbReference type="NCBIfam" id="TIGR00125">
    <property type="entry name" value="cyt_tran_rel"/>
    <property type="match status" value="1"/>
</dbReference>
<dbReference type="NCBIfam" id="TIGR00482">
    <property type="entry name" value="nicotinate (nicotinamide) nucleotide adenylyltransferase"/>
    <property type="match status" value="1"/>
</dbReference>
<dbReference type="NCBIfam" id="NF000839">
    <property type="entry name" value="PRK00071.1-1"/>
    <property type="match status" value="1"/>
</dbReference>
<dbReference type="NCBIfam" id="NF000840">
    <property type="entry name" value="PRK00071.1-3"/>
    <property type="match status" value="1"/>
</dbReference>
<dbReference type="PANTHER" id="PTHR39321">
    <property type="entry name" value="NICOTINATE-NUCLEOTIDE ADENYLYLTRANSFERASE-RELATED"/>
    <property type="match status" value="1"/>
</dbReference>
<dbReference type="PANTHER" id="PTHR39321:SF3">
    <property type="entry name" value="PHOSPHOPANTETHEINE ADENYLYLTRANSFERASE"/>
    <property type="match status" value="1"/>
</dbReference>
<dbReference type="Pfam" id="PF01467">
    <property type="entry name" value="CTP_transf_like"/>
    <property type="match status" value="1"/>
</dbReference>
<dbReference type="SUPFAM" id="SSF52374">
    <property type="entry name" value="Nucleotidylyl transferase"/>
    <property type="match status" value="1"/>
</dbReference>
<proteinExistence type="inferred from homology"/>
<feature type="chain" id="PRO_0000336721" description="Probable nicotinate-nucleotide adenylyltransferase">
    <location>
        <begin position="1"/>
        <end position="219"/>
    </location>
</feature>
<sequence length="219" mass="24969">MNNLRPALGIFGGTFDPVHYGHTESVIVAAQQAGVQSVAMLPCHIPVHKNHAPSDSHHRLAMLKLAIEQYPQLYIDEREIHSDTPSYTIHTLRALRKEYPKHPLCFFIGMDSLHSLLSWNEWQALFDYCHFVVCCRPGTKTPLSEELKALLVERQVATNNALHNALHGKIFLADTPELDISSSEIRRRIINNLPTDDMLAPKVRRYIQTHKLYQPSTTF</sequence>
<gene>
    <name evidence="1" type="primary">nadD</name>
    <name type="ordered locus">Patl_1563</name>
</gene>
<name>NADD_PSEA6</name>
<keyword id="KW-0067">ATP-binding</keyword>
<keyword id="KW-0520">NAD</keyword>
<keyword id="KW-0547">Nucleotide-binding</keyword>
<keyword id="KW-0548">Nucleotidyltransferase</keyword>
<keyword id="KW-0662">Pyridine nucleotide biosynthesis</keyword>
<keyword id="KW-0808">Transferase</keyword>
<reference key="1">
    <citation type="submission" date="2006-06" db="EMBL/GenBank/DDBJ databases">
        <title>Complete sequence of Pseudoalteromonas atlantica T6c.</title>
        <authorList>
            <consortium name="US DOE Joint Genome Institute"/>
            <person name="Copeland A."/>
            <person name="Lucas S."/>
            <person name="Lapidus A."/>
            <person name="Barry K."/>
            <person name="Detter J.C."/>
            <person name="Glavina del Rio T."/>
            <person name="Hammon N."/>
            <person name="Israni S."/>
            <person name="Dalin E."/>
            <person name="Tice H."/>
            <person name="Pitluck S."/>
            <person name="Saunders E."/>
            <person name="Brettin T."/>
            <person name="Bruce D."/>
            <person name="Han C."/>
            <person name="Tapia R."/>
            <person name="Gilna P."/>
            <person name="Schmutz J."/>
            <person name="Larimer F."/>
            <person name="Land M."/>
            <person name="Hauser L."/>
            <person name="Kyrpides N."/>
            <person name="Kim E."/>
            <person name="Karls A.C."/>
            <person name="Bartlett D."/>
            <person name="Higgins B.P."/>
            <person name="Richardson P."/>
        </authorList>
    </citation>
    <scope>NUCLEOTIDE SEQUENCE [LARGE SCALE GENOMIC DNA]</scope>
    <source>
        <strain>T6c / ATCC BAA-1087</strain>
    </source>
</reference>
<evidence type="ECO:0000255" key="1">
    <source>
        <dbReference type="HAMAP-Rule" id="MF_00244"/>
    </source>
</evidence>
<accession>Q15VK3</accession>
<comment type="function">
    <text evidence="1">Catalyzes the reversible adenylation of nicotinate mononucleotide (NaMN) to nicotinic acid adenine dinucleotide (NaAD).</text>
</comment>
<comment type="catalytic activity">
    <reaction evidence="1">
        <text>nicotinate beta-D-ribonucleotide + ATP + H(+) = deamido-NAD(+) + diphosphate</text>
        <dbReference type="Rhea" id="RHEA:22860"/>
        <dbReference type="ChEBI" id="CHEBI:15378"/>
        <dbReference type="ChEBI" id="CHEBI:30616"/>
        <dbReference type="ChEBI" id="CHEBI:33019"/>
        <dbReference type="ChEBI" id="CHEBI:57502"/>
        <dbReference type="ChEBI" id="CHEBI:58437"/>
        <dbReference type="EC" id="2.7.7.18"/>
    </reaction>
</comment>
<comment type="pathway">
    <text evidence="1">Cofactor biosynthesis; NAD(+) biosynthesis; deamido-NAD(+) from nicotinate D-ribonucleotide: step 1/1.</text>
</comment>
<comment type="similarity">
    <text evidence="1">Belongs to the NadD family.</text>
</comment>
<protein>
    <recommendedName>
        <fullName evidence="1">Probable nicotinate-nucleotide adenylyltransferase</fullName>
        <ecNumber evidence="1">2.7.7.18</ecNumber>
    </recommendedName>
    <alternativeName>
        <fullName evidence="1">Deamido-NAD(+) diphosphorylase</fullName>
    </alternativeName>
    <alternativeName>
        <fullName evidence="1">Deamido-NAD(+) pyrophosphorylase</fullName>
    </alternativeName>
    <alternativeName>
        <fullName evidence="1">Nicotinate mononucleotide adenylyltransferase</fullName>
        <shortName evidence="1">NaMN adenylyltransferase</shortName>
    </alternativeName>
</protein>